<dbReference type="EMBL" id="CR859087">
    <property type="protein sequence ID" value="CAH91279.1"/>
    <property type="molecule type" value="mRNA"/>
</dbReference>
<dbReference type="EMBL" id="CR859609">
    <property type="protein sequence ID" value="CAH91772.1"/>
    <property type="status" value="ALT_FRAME"/>
    <property type="molecule type" value="mRNA"/>
</dbReference>
<dbReference type="EMBL" id="CR860449">
    <property type="protein sequence ID" value="CAH92572.1"/>
    <property type="molecule type" value="mRNA"/>
</dbReference>
<dbReference type="EMBL" id="CR861202">
    <property type="protein sequence ID" value="CAH93273.1"/>
    <property type="molecule type" value="mRNA"/>
</dbReference>
<dbReference type="EMBL" id="CR861433">
    <property type="protein sequence ID" value="CAH93489.1"/>
    <property type="molecule type" value="mRNA"/>
</dbReference>
<dbReference type="RefSeq" id="NP_001126925.1">
    <property type="nucleotide sequence ID" value="NM_001133453.1"/>
</dbReference>
<dbReference type="RefSeq" id="NP_001153184.1">
    <property type="nucleotide sequence ID" value="NM_001159712.1"/>
</dbReference>
<dbReference type="RefSeq" id="XP_024108880.1">
    <molecule id="Q5R8Y8-2"/>
    <property type="nucleotide sequence ID" value="XM_024253112.3"/>
</dbReference>
<dbReference type="RefSeq" id="XP_054377659.1">
    <molecule id="Q5R8Y8-1"/>
    <property type="nucleotide sequence ID" value="XM_054521684.2"/>
</dbReference>
<dbReference type="BMRB" id="Q5R8Y8"/>
<dbReference type="SMR" id="Q5R8Y8"/>
<dbReference type="FunCoup" id="Q5R8Y8">
    <property type="interactions" value="1674"/>
</dbReference>
<dbReference type="STRING" id="9601.ENSPPYP00000002413"/>
<dbReference type="GeneID" id="100173942"/>
<dbReference type="KEGG" id="pon:100173942"/>
<dbReference type="CTD" id="10659"/>
<dbReference type="eggNOG" id="KOG0144">
    <property type="taxonomic scope" value="Eukaryota"/>
</dbReference>
<dbReference type="HOGENOM" id="CLU_015367_0_2_1"/>
<dbReference type="InParanoid" id="Q5R8Y8"/>
<dbReference type="OrthoDB" id="410044at2759"/>
<dbReference type="TreeFam" id="TF314924"/>
<dbReference type="Proteomes" id="UP000001595">
    <property type="component" value="Chromosome 10"/>
</dbReference>
<dbReference type="GO" id="GO:0005737">
    <property type="term" value="C:cytoplasm"/>
    <property type="evidence" value="ECO:0007669"/>
    <property type="project" value="UniProtKB-SubCell"/>
</dbReference>
<dbReference type="GO" id="GO:0005634">
    <property type="term" value="C:nucleus"/>
    <property type="evidence" value="ECO:0000250"/>
    <property type="project" value="UniProtKB"/>
</dbReference>
<dbReference type="GO" id="GO:1990904">
    <property type="term" value="C:ribonucleoprotein complex"/>
    <property type="evidence" value="ECO:0007669"/>
    <property type="project" value="InterPro"/>
</dbReference>
<dbReference type="GO" id="GO:0003723">
    <property type="term" value="F:RNA binding"/>
    <property type="evidence" value="ECO:0007669"/>
    <property type="project" value="UniProtKB-KW"/>
</dbReference>
<dbReference type="GO" id="GO:0006397">
    <property type="term" value="P:mRNA processing"/>
    <property type="evidence" value="ECO:0007669"/>
    <property type="project" value="UniProtKB-KW"/>
</dbReference>
<dbReference type="CDD" id="cd12631">
    <property type="entry name" value="RRM1_CELF1_2_Bruno"/>
    <property type="match status" value="1"/>
</dbReference>
<dbReference type="CDD" id="cd12634">
    <property type="entry name" value="RRM2_CELF1_2"/>
    <property type="match status" value="1"/>
</dbReference>
<dbReference type="CDD" id="cd12638">
    <property type="entry name" value="RRM3_CELF1_2"/>
    <property type="match status" value="1"/>
</dbReference>
<dbReference type="FunFam" id="3.30.70.330:FF:000013">
    <property type="entry name" value="CUGBP Elav-like family member 1 isoform 2"/>
    <property type="match status" value="1"/>
</dbReference>
<dbReference type="FunFam" id="3.30.70.330:FF:000015">
    <property type="entry name" value="CUGBP Elav-like family member 1 isoform 2"/>
    <property type="match status" value="1"/>
</dbReference>
<dbReference type="FunFam" id="3.30.70.330:FF:000016">
    <property type="entry name" value="CUGBP Elav-like family member 1 isoform 2"/>
    <property type="match status" value="1"/>
</dbReference>
<dbReference type="Gene3D" id="3.30.70.330">
    <property type="match status" value="3"/>
</dbReference>
<dbReference type="InterPro" id="IPR034196">
    <property type="entry name" value="CELF1/2_RRM1"/>
</dbReference>
<dbReference type="InterPro" id="IPR034198">
    <property type="entry name" value="CELF1/2_RRM2"/>
</dbReference>
<dbReference type="InterPro" id="IPR034199">
    <property type="entry name" value="CELF1/2_RRM3"/>
</dbReference>
<dbReference type="InterPro" id="IPR002343">
    <property type="entry name" value="Hud_Sxl_RNA"/>
</dbReference>
<dbReference type="InterPro" id="IPR012677">
    <property type="entry name" value="Nucleotide-bd_a/b_plait_sf"/>
</dbReference>
<dbReference type="InterPro" id="IPR035979">
    <property type="entry name" value="RBD_domain_sf"/>
</dbReference>
<dbReference type="InterPro" id="IPR000504">
    <property type="entry name" value="RRM_dom"/>
</dbReference>
<dbReference type="PANTHER" id="PTHR24012">
    <property type="entry name" value="RNA BINDING PROTEIN"/>
    <property type="match status" value="1"/>
</dbReference>
<dbReference type="Pfam" id="PF00076">
    <property type="entry name" value="RRM_1"/>
    <property type="match status" value="3"/>
</dbReference>
<dbReference type="PRINTS" id="PR00961">
    <property type="entry name" value="HUDSXLRNA"/>
</dbReference>
<dbReference type="SMART" id="SM00360">
    <property type="entry name" value="RRM"/>
    <property type="match status" value="3"/>
</dbReference>
<dbReference type="SUPFAM" id="SSF54928">
    <property type="entry name" value="RNA-binding domain, RBD"/>
    <property type="match status" value="2"/>
</dbReference>
<dbReference type="PROSITE" id="PS50102">
    <property type="entry name" value="RRM"/>
    <property type="match status" value="3"/>
</dbReference>
<evidence type="ECO:0000250" key="1"/>
<evidence type="ECO:0000250" key="2">
    <source>
        <dbReference type="UniProtKB" id="O95319"/>
    </source>
</evidence>
<evidence type="ECO:0000250" key="3">
    <source>
        <dbReference type="UniProtKB" id="Q9Z0H4"/>
    </source>
</evidence>
<evidence type="ECO:0000255" key="4">
    <source>
        <dbReference type="PROSITE-ProRule" id="PRU00176"/>
    </source>
</evidence>
<evidence type="ECO:0000303" key="5">
    <source ref="1"/>
</evidence>
<evidence type="ECO:0000305" key="6"/>
<protein>
    <recommendedName>
        <fullName>CUGBP Elav-like family member 2</fullName>
        <shortName>CELF-2</shortName>
    </recommendedName>
    <alternativeName>
        <fullName>Bruno-like protein 3</fullName>
    </alternativeName>
    <alternativeName>
        <fullName>CUG triplet repeat RNA-binding protein 2</fullName>
        <shortName>CUG-BP2</shortName>
    </alternativeName>
    <alternativeName>
        <fullName>CUG-BP- and ETR-3-like factor 2</fullName>
    </alternativeName>
    <alternativeName>
        <fullName>RNA-binding protein BRUNOL-3</fullName>
    </alternativeName>
</protein>
<name>CELF2_PONAB</name>
<comment type="function">
    <text evidence="2 3">RNA-binding protein implicated in the regulation of several post-transcriptional events. Involved in pre-mRNA alternative splicing, mRNA translation and stability. Mediates exon inclusion and/or exclusion in pre-mRNA that are subject to tissue-specific and developmentally regulated alternative splicing. Specifically activates exon 5 inclusion of TNNT2 in embryonic, but not adult, skeletal muscle. Activates TNNT2 exon 5 inclusion by antagonizing the repressive effect of PTB. Acts both as an activator and as a repressor of a pair of coregulated exons: promotes inclusion of the smooth muscle (SM) exon but exclusion of the non-muscle (NM) exon in actinin pre-mRNAs. Promotes inclusion of exonS 21 and exclusion of exon 5 of the NMDA receptor R1 pre-mRNA. Involved in the apoB RNA editing activity. Increases COX2 mRNA stability and inhibits COX2 mRNA translation in epithelial cells after radiation injury. Modulates the cellular apoptosis program by regulating COX2-mediated prostaglandin E2 (PGE2) expression. Binds to (CUG)n triplet repeats in the 3'-UTR of transcripts such as DMPK. Binds to the muscle-specific splicing enhancer (MSE) intronic sites flanking the TNNT2 alternative exon 5. Binds preferentially to UG-rich sequences, in particular UG repeat and UGUU motifs. Binds to apoB mRNA, specifically to AU-rich sequences located immediately upstream of the edited cytidine. Binds AU-rich sequences in the 3'-UTR of COX2 mRNA. Binds to an intronic RNA element responsible for the silencing of exon 21 splicing. Binds to (CUG)n repeats (By similarity). May be a specific regulator of miRNA biogenesis. Binds to primary microRNA pri-MIR140 and, with CELF1, negatively regulates the processing to mature miRNA (By similarity).</text>
</comment>
<comment type="subunit">
    <text evidence="1">Interacts with A1CF.</text>
</comment>
<comment type="subcellular location">
    <subcellularLocation>
        <location evidence="2">Nucleus</location>
    </subcellularLocation>
    <subcellularLocation>
        <location evidence="3">Cytoplasm</location>
    </subcellularLocation>
    <text evidence="1">Accumulates in the cytoplasm after ionizing radiation. Colocalizes with APOBEC1 and A1CF. RNA-binding activity is detected in both nuclear and cytoplasmic compartments (By similarity).</text>
</comment>
<comment type="alternative products">
    <event type="alternative splicing"/>
    <isoform>
        <id>Q5R8Y8-1</id>
        <name>1</name>
        <sequence type="displayed"/>
    </isoform>
    <isoform>
        <id>Q5R8Y8-2</id>
        <name>2</name>
        <sequence type="described" ref="VSP_026810"/>
    </isoform>
    <isoform>
        <id>Q5R8Y8-3</id>
        <name>3</name>
        <sequence type="described" ref="VSP_026809 VSP_026810"/>
    </isoform>
    <isoform>
        <id>Q5R8Y8-4</id>
        <name>4</name>
        <sequence type="described" ref="VSP_026809"/>
    </isoform>
    <isoform>
        <id>Q5R8Y8-5</id>
        <name>5</name>
        <sequence type="described" ref="VSP_026811 VSP_026812"/>
    </isoform>
</comment>
<comment type="similarity">
    <text evidence="6">Belongs to the CELF/BRUNOL family.</text>
</comment>
<comment type="sequence caution" evidence="6">
    <conflict type="frameshift">
        <sequence resource="EMBL-CDS" id="CAH91772"/>
    </conflict>
</comment>
<gene>
    <name type="primary">CELF2</name>
    <name type="synonym">CUGBP2</name>
</gene>
<reference key="1">
    <citation type="submission" date="2004-11" db="EMBL/GenBank/DDBJ databases">
        <authorList>
            <consortium name="The German cDNA consortium"/>
        </authorList>
    </citation>
    <scope>NUCLEOTIDE SEQUENCE [LARGE SCALE MRNA] (ISOFORMS 1; 2; 3; 4 AND 5)</scope>
    <source>
        <tissue>Brain cortex</tissue>
    </source>
</reference>
<accession>Q5R8Y8</accession>
<accession>Q5R427</accession>
<accession>Q5R4P3</accession>
<accession>Q5R6N8</accession>
<accession>Q5RAD1</accession>
<keyword id="KW-0025">Alternative splicing</keyword>
<keyword id="KW-0963">Cytoplasm</keyword>
<keyword id="KW-0507">mRNA processing</keyword>
<keyword id="KW-0539">Nucleus</keyword>
<keyword id="KW-1185">Reference proteome</keyword>
<keyword id="KW-0677">Repeat</keyword>
<keyword id="KW-0678">Repressor</keyword>
<keyword id="KW-0694">RNA-binding</keyword>
<organism>
    <name type="scientific">Pongo abelii</name>
    <name type="common">Sumatran orangutan</name>
    <name type="synonym">Pongo pygmaeus abelii</name>
    <dbReference type="NCBI Taxonomy" id="9601"/>
    <lineage>
        <taxon>Eukaryota</taxon>
        <taxon>Metazoa</taxon>
        <taxon>Chordata</taxon>
        <taxon>Craniata</taxon>
        <taxon>Vertebrata</taxon>
        <taxon>Euteleostomi</taxon>
        <taxon>Mammalia</taxon>
        <taxon>Eutheria</taxon>
        <taxon>Euarchontoglires</taxon>
        <taxon>Primates</taxon>
        <taxon>Haplorrhini</taxon>
        <taxon>Catarrhini</taxon>
        <taxon>Hominidae</taxon>
        <taxon>Pongo</taxon>
    </lineage>
</organism>
<sequence>MRCPKSAVTMRNEELLLSNGTANKMNGALDHSDQPDPDAIKMFVGQIPRSWSEKELKELFEPYGAVYQINVLRDRSQNPPQSKGCCFVTFYTRKAALEAQNALHNIKTLPGMHHPIQMKPADSEKSNAVEDRKLFIGMVSKKCNENDIRVMFSPFGQIEECRILRGPDGLSRGCAFVTFSTRAMAQNAIKAMHQSQTMEGCSSPIVVKFADTQKDKEQRRLQQQLAQQMQQLNTATWGNLTGLGGLTPQYLALLQQATSSSNLGAFSGIQQMAGMNALQLQNLATLAAAAAAAQTSATSTNANPLSTTSSALGALTSPVAASTPNSTAGAAMNSLTSLGTLQGLAGATVGLNNINALAGMAALNGGLGATGLTNGTAGTMDALTQAYSGIQQYAAAALPTLYSQSLLQQQSAAGSQKEGPEGANLFIYHLPQEFGDQDILQMFMPFGNVISAKVFIDKQTNLSKCFGFVSYDNPVSAQAAIQAMNGFQIGMKRLKVQLKRSKNDSKPY</sequence>
<feature type="chain" id="PRO_0000295191" description="CUGBP Elav-like family member 2">
    <location>
        <begin position="1"/>
        <end position="508"/>
    </location>
</feature>
<feature type="domain" description="RRM 1" evidence="4">
    <location>
        <begin position="40"/>
        <end position="123"/>
    </location>
</feature>
<feature type="domain" description="RRM 2" evidence="4">
    <location>
        <begin position="132"/>
        <end position="212"/>
    </location>
</feature>
<feature type="domain" description="RRM 3" evidence="4">
    <location>
        <begin position="423"/>
        <end position="501"/>
    </location>
</feature>
<feature type="region of interest" description="Necessary for RNA-binding, TNNT2 exon 5 and NMDA R1 exon 21 inclusion" evidence="1">
    <location>
        <begin position="1"/>
        <end position="283"/>
    </location>
</feature>
<feature type="region of interest" description="Necessary for RNA-binding, TNNT2 exon 5 and NMDA R1 exon 21 inclusion" evidence="1">
    <location>
        <begin position="357"/>
        <end position="508"/>
    </location>
</feature>
<feature type="splice variant" id="VSP_026809" description="In isoform 3 and isoform 4." evidence="5">
    <location>
        <begin position="1"/>
        <end position="24"/>
    </location>
</feature>
<feature type="splice variant" id="VSP_026810" description="In isoform 2 and isoform 3." evidence="5">
    <original>A</original>
    <variation>AVAQMLS</variation>
    <location>
        <position position="358"/>
    </location>
</feature>
<feature type="splice variant" id="VSP_026811" description="In isoform 5." evidence="5">
    <original>GM</original>
    <variation>VA</variation>
    <location>
        <begin position="359"/>
        <end position="360"/>
    </location>
</feature>
<feature type="splice variant" id="VSP_026812" description="In isoform 5." evidence="5">
    <location>
        <begin position="361"/>
        <end position="508"/>
    </location>
</feature>
<feature type="sequence conflict" description="In Ref. 1; CAH93489." evidence="6" ref="1">
    <original>N</original>
    <variation>D</variation>
    <location>
        <position position="70"/>
    </location>
</feature>
<feature type="sequence conflict" description="In Ref. 1; CAH93273." evidence="6" ref="1">
    <original>T</original>
    <variation>S</variation>
    <location>
        <position position="89"/>
    </location>
</feature>
<feature type="sequence conflict" description="In Ref. 1; CAH93489." evidence="6" ref="1">
    <original>R</original>
    <variation>W</variation>
    <location>
        <position position="162"/>
    </location>
</feature>
<feature type="sequence conflict" description="In Ref. 1; CAH91772." evidence="6" ref="1">
    <original>F</original>
    <variation>S</variation>
    <location>
        <position position="179"/>
    </location>
</feature>
<feature type="sequence conflict" description="In Ref. 1; CAH91279." evidence="6" ref="1">
    <original>P</original>
    <variation>S</variation>
    <location>
        <position position="204"/>
    </location>
</feature>
<feature type="sequence conflict" description="In Ref. 1; CAH92572." evidence="6" ref="1">
    <original>L</original>
    <variation>P</variation>
    <location>
        <position position="430"/>
    </location>
</feature>
<proteinExistence type="evidence at transcript level"/>